<reference key="1">
    <citation type="journal article" date="1980" name="Nature">
        <title>Nucleotide sequence of the yeast plasmid.</title>
        <authorList>
            <person name="Hartley J.L."/>
            <person name="Donelson J.E."/>
        </authorList>
    </citation>
    <scope>NUCLEOTIDE SEQUENCE [GENOMIC DNA]</scope>
    <source>
        <strain>A364A D5</strain>
    </source>
</reference>
<reference key="2">
    <citation type="journal article" date="1987" name="EMBO J.">
        <title>Antagonistic controls regulate copy number of the yeast 2 micron plasmid.</title>
        <authorList>
            <person name="Murray J.A.H."/>
            <person name="Scarpa M."/>
            <person name="Rossi N."/>
            <person name="Cesareni G."/>
        </authorList>
    </citation>
    <scope>FUNCTION</scope>
</reference>
<reference key="3">
    <citation type="journal article" date="1997" name="J. Bacteriol.">
        <title>The 2 micrometer-plasmid-encoded Rep1 and Rep2 proteins interact with each other and colocalize to the Saccharomyces cerevisiae nucleus.</title>
        <authorList>
            <person name="Ahn Y.-T."/>
            <person name="Wu X.-L."/>
            <person name="Biswal S."/>
            <person name="Velmurugan S."/>
            <person name="Volkert F.C."/>
            <person name="Jayaram M."/>
        </authorList>
    </citation>
    <scope>SUBCELLULAR LOCATION</scope>
    <scope>INTERACTION WITH REP1</scope>
</reference>
<reference key="4">
    <citation type="journal article" date="1998" name="Mol. Cell. Biol.">
        <title>The 2 micrometer plasmid stability system: analyses of the interactions among plasmid- and host-encoded components.</title>
        <authorList>
            <person name="Velmurugan S."/>
            <person name="Ahn Y.-T."/>
            <person name="Yang X.-M."/>
            <person name="Wu X.-L."/>
            <person name="Jayaram M."/>
        </authorList>
    </citation>
    <scope>SUBCELLULAR LOCATION</scope>
</reference>
<reference key="5">
    <citation type="journal article" date="2000" name="J. Cell Biol.">
        <title>Partitioning of the 2-micrometer circle plasmid of Saccharomyces cerevisiae. Functional coordination with chromosome segregation and plasmid-encoded Rep protein distribution.</title>
        <authorList>
            <person name="Velmurugan S."/>
            <person name="Yang X.-M."/>
            <person name="Chan C.S.-M."/>
            <person name="Dobson M.J."/>
            <person name="Jayaram M."/>
        </authorList>
    </citation>
    <scope>FUNCTION</scope>
    <scope>SUBCELLULAR LOCATION</scope>
</reference>
<reference key="6">
    <citation type="journal article" date="2001" name="J. Bacteriol.">
        <title>Functional domains of yeast plasmid-encoded Rep proteins.</title>
        <authorList>
            <person name="Sengupta A."/>
            <person name="Blomqvist K."/>
            <person name="Pickett A.J."/>
            <person name="Zhang Y."/>
            <person name="Chew J.S.K."/>
            <person name="Dobson M.J."/>
        </authorList>
    </citation>
    <scope>INTERACTION WITH REP1</scope>
    <scope>DNA-BINDING</scope>
</reference>
<reference key="7">
    <citation type="journal article" date="2002" name="J. Cell Biol.">
        <title>The 2 micron plasmid purloins the yeast cohesin complex: a mechanism for coupling plasmid partitioning and chromosome segregation?</title>
        <authorList>
            <person name="Mehta S."/>
            <person name="Yang X.-M."/>
            <person name="Chan C.S.-M."/>
            <person name="Dobson M.J."/>
            <person name="Jayaram M."/>
            <person name="Velmurugan S."/>
        </authorList>
    </citation>
    <scope>FUNCTION</scope>
</reference>
<reference key="8">
    <citation type="journal article" date="2006" name="J. Cell Biol.">
        <title>The centromere-specific histone variant Cse4p (CENP-A) is essential for functional chromatin architecture at the yeast 2-micrometer circle partitioning locus and promotes equal plasmid segregation.</title>
        <authorList>
            <person name="Hajra S."/>
            <person name="Ghosh S.K."/>
            <person name="Jayaram M."/>
        </authorList>
    </citation>
    <scope>FUNCTION</scope>
</reference>
<reference key="9">
    <citation type="journal article" date="2008" name="Mol. Cell. Proteomics">
        <title>A multidimensional chromatography technology for in-depth phosphoproteome analysis.</title>
        <authorList>
            <person name="Albuquerque C.P."/>
            <person name="Smolka M.B."/>
            <person name="Payne S.H."/>
            <person name="Bafna V."/>
            <person name="Eng J."/>
            <person name="Zhou H."/>
        </authorList>
    </citation>
    <scope>IDENTIFICATION BY MASS SPECTROMETRY [LARGE SCALE ANALYSIS]</scope>
</reference>
<reference key="10">
    <citation type="journal article" date="2012" name="Proc. Natl. Acad. Sci. U.S.A.">
        <title>N-terminal acetylome analyses and functional insights of the N-terminal acetyltransferase NatB.</title>
        <authorList>
            <person name="Van Damme P."/>
            <person name="Lasa M."/>
            <person name="Polevoda B."/>
            <person name="Gazquez C."/>
            <person name="Elosegui-Artola A."/>
            <person name="Kim D.S."/>
            <person name="De Juan-Pardo E."/>
            <person name="Demeyer K."/>
            <person name="Hole K."/>
            <person name="Larrea E."/>
            <person name="Timmerman E."/>
            <person name="Prieto J."/>
            <person name="Arnesen T."/>
            <person name="Sherman F."/>
            <person name="Gevaert K."/>
            <person name="Aldabe R."/>
        </authorList>
    </citation>
    <scope>ACETYLATION [LARGE SCALE ANALYSIS] AT MET-1</scope>
    <scope>IDENTIFICATION BY MASS SPECTROMETRY [LARGE SCALE ANALYSIS]</scope>
</reference>
<comment type="function">
    <text evidence="2 4 5 6">Part of the plasmid partitioning system, which ensures the equal distribution of replicated plasmid molecules to daughter cells. The plasmids exist as well-organized plasmid foci within the nucleus that stay together throughout the cell-cycle and act as entity during segregation, effetively reducing copy number to one. Plasmid partitioning requires the proteins REP1, REP2, and a cis-acting locus STB (REP3). REP1-REP2 stably associate with CSE4-containing chromatin at STB during S-phase, marking the locus with a centromeric tag, and thereby probably catching mitotic spindle microtubules to the plasmid cluster and coupling plasmid segregation to chromosome segregation. REP1-REP2 are required to recruit the cohesin complex to the STB locus for pairing of the replicated plasmid cluster, a prerequisite for successful plasmid segregation. REP1-REP2 also negatively regulate expression of site-specific recombinase FLP and of RAF1.</text>
</comment>
<comment type="subunit">
    <text evidence="3 7">Interacts with REP1.</text>
</comment>
<comment type="interaction">
    <interactant intactId="EBI-2125362">
        <id>P03872</id>
    </interactant>
    <interactant intactId="EBI-14929">
        <id>P03871</id>
        <label>REP1</label>
    </interactant>
    <organismsDiffer>false</organismsDiffer>
    <experiments>7</experiments>
</comment>
<comment type="interaction">
    <interactant intactId="EBI-2125362">
        <id>P03872</id>
    </interactant>
    <interactant intactId="EBI-2125362">
        <id>P03872</id>
        <label>REP2</label>
    </interactant>
    <organismsDiffer>false</organismsDiffer>
    <experiments>5</experiments>
</comment>
<comment type="subcellular location">
    <subcellularLocation>
        <location evidence="2 7 8">Nucleus</location>
    </subcellularLocation>
    <text>Colocalizes with the STB locus of the 2-micron plasmid as foci in the nucleus near the spindle pole body. Is expelled from STB during a short interval between late G1 and early S phases.</text>
</comment>
<comment type="miscellaneous">
    <text>The plasmid 2-micron circle is a extrachromosomal element that resides in the nucleus and propagates itself stably in host cell populations. It provides no obvious advantage to the host but imposes no significant disadvantage either at its steady-state copy number of 40-60 molecules/cell.</text>
</comment>
<protein>
    <recommendedName>
        <fullName>Partitioning protein REP2</fullName>
        <shortName>R2</shortName>
    </recommendedName>
    <alternativeName>
        <fullName>Protein Charlie</fullName>
    </alternativeName>
    <alternativeName>
        <fullName>Trans-acting factor C</fullName>
    </alternativeName>
</protein>
<dbReference type="EMBL" id="J01347">
    <property type="protein sequence ID" value="AAB59343.1"/>
    <property type="molecule type" value="Genomic_DNA"/>
</dbReference>
<dbReference type="PIR" id="A04504">
    <property type="entry name" value="PDBYC"/>
</dbReference>
<dbReference type="DIP" id="DIP-7245N"/>
<dbReference type="FunCoup" id="P03872">
    <property type="interactions" value="7"/>
</dbReference>
<dbReference type="IntAct" id="P03872">
    <property type="interactions" value="5"/>
</dbReference>
<dbReference type="GlyGen" id="P03872">
    <property type="glycosylation" value="1 site"/>
</dbReference>
<dbReference type="iPTMnet" id="P03872"/>
<dbReference type="PeptideAtlas" id="P03872"/>
<dbReference type="AGR" id="SGD:S000029676"/>
<dbReference type="SGD" id="S000029676">
    <property type="gene designation" value="REP2"/>
</dbReference>
<dbReference type="InParanoid" id="P03872"/>
<dbReference type="PRO" id="PR:P03872"/>
<dbReference type="Proteomes" id="UP000002311">
    <property type="component" value="Plasmid 2-micron"/>
</dbReference>
<dbReference type="RNAct" id="P03872">
    <property type="molecule type" value="protein"/>
</dbReference>
<dbReference type="GO" id="GO:0005634">
    <property type="term" value="C:nucleus"/>
    <property type="evidence" value="ECO:0000314"/>
    <property type="project" value="SGD"/>
</dbReference>
<dbReference type="GO" id="GO:0042802">
    <property type="term" value="F:identical protein binding"/>
    <property type="evidence" value="ECO:0000353"/>
    <property type="project" value="IntAct"/>
</dbReference>
<dbReference type="GO" id="GO:0030543">
    <property type="term" value="P:2-micrometer plasmid partitioning"/>
    <property type="evidence" value="ECO:0000314"/>
    <property type="project" value="SGD"/>
</dbReference>
<dbReference type="GO" id="GO:0050821">
    <property type="term" value="P:protein stabilization"/>
    <property type="evidence" value="ECO:0000315"/>
    <property type="project" value="SGD"/>
</dbReference>
<organism>
    <name type="scientific">Saccharomyces cerevisiae (strain ATCC 204508 / S288c)</name>
    <name type="common">Baker's yeast</name>
    <dbReference type="NCBI Taxonomy" id="559292"/>
    <lineage>
        <taxon>Eukaryota</taxon>
        <taxon>Fungi</taxon>
        <taxon>Dikarya</taxon>
        <taxon>Ascomycota</taxon>
        <taxon>Saccharomycotina</taxon>
        <taxon>Saccharomycetes</taxon>
        <taxon>Saccharomycetales</taxon>
        <taxon>Saccharomycetaceae</taxon>
        <taxon>Saccharomyces</taxon>
    </lineage>
</organism>
<gene>
    <name type="primary">REP2</name>
    <name type="ordered locus">R0040C</name>
</gene>
<keyword id="KW-0007">Acetylation</keyword>
<keyword id="KW-0539">Nucleus</keyword>
<keyword id="KW-0614">Plasmid</keyword>
<keyword id="KW-0616">Plasmid partition</keyword>
<keyword id="KW-1185">Reference proteome</keyword>
<accession>P03872</accession>
<evidence type="ECO:0000256" key="1">
    <source>
        <dbReference type="SAM" id="MobiDB-lite"/>
    </source>
</evidence>
<evidence type="ECO:0000269" key="2">
    <source>
    </source>
</evidence>
<evidence type="ECO:0000269" key="3">
    <source>
    </source>
</evidence>
<evidence type="ECO:0000269" key="4">
    <source>
    </source>
</evidence>
<evidence type="ECO:0000269" key="5">
    <source>
    </source>
</evidence>
<evidence type="ECO:0000269" key="6">
    <source>
    </source>
</evidence>
<evidence type="ECO:0000269" key="7">
    <source>
    </source>
</evidence>
<evidence type="ECO:0000269" key="8">
    <source>
    </source>
</evidence>
<evidence type="ECO:0007744" key="9">
    <source>
    </source>
</evidence>
<geneLocation type="plasmid">
    <name>2-micron</name>
</geneLocation>
<name>REP2_YEAST</name>
<sequence>MDDIETAKNLTVKARTAYSVWDVCRLFIEMIAPDVDIDIESKRKSDELLFPGYVIRPMESLTTGRPYGLDSSAEDSSVSSDSSAEVILPAAKMVKERFDSIGNGMLSSQEASQAAIDLMLQNNKLLDNRKQLYKSIAIIIGRLPEKDKKRATEMLMRKMDCTQLLVPPAPTEEDVMKLVSVVTQLLTLVPPDRQAALIGDLFIPESLKDIFNSFNELAAENRLQQKKSELEGRTEVNHANTNEEVPSRRTRSRDTNARGAYKLQNTITEGPKAVPTKKRRVATRVRGRKSRNTSRV</sequence>
<proteinExistence type="evidence at protein level"/>
<feature type="chain" id="PRO_0000150898" description="Partitioning protein REP2">
    <location>
        <begin position="1"/>
        <end position="296"/>
    </location>
</feature>
<feature type="region of interest" description="Interaction with REP1">
    <location>
        <begin position="1"/>
        <end position="57"/>
    </location>
</feature>
<feature type="region of interest" description="DNA-binding, and self-association">
    <location>
        <begin position="58"/>
        <end position="296"/>
    </location>
</feature>
<feature type="region of interest" description="Disordered" evidence="1">
    <location>
        <begin position="228"/>
        <end position="296"/>
    </location>
</feature>
<feature type="region of interest" description="Nuclear localization">
    <location>
        <begin position="276"/>
        <end position="296"/>
    </location>
</feature>
<feature type="compositionally biased region" description="Basic residues" evidence="1">
    <location>
        <begin position="275"/>
        <end position="296"/>
    </location>
</feature>
<feature type="modified residue" description="N-acetylmethionine" evidence="9">
    <location>
        <position position="1"/>
    </location>
</feature>